<reference key="1">
    <citation type="journal article" date="2000" name="Biochem. Syst. Ecol.">
        <title>Molecular characterization and mitochondrial sequence variation in two sympatric species of Proechimys (Rodentia: Echimyidae) in French Guiana.</title>
        <authorList>
            <person name="Steiner C."/>
            <person name="Sourrouille P."/>
            <person name="Catzeflis F."/>
        </authorList>
    </citation>
    <scope>NUCLEOTIDE SEQUENCE [GENOMIC DNA]</scope>
    <source>
        <strain>Isolate T-1757 / V-824</strain>
    </source>
</reference>
<evidence type="ECO:0000250" key="1"/>
<evidence type="ECO:0000250" key="2">
    <source>
        <dbReference type="UniProtKB" id="P00157"/>
    </source>
</evidence>
<evidence type="ECO:0000255" key="3">
    <source>
        <dbReference type="PROSITE-ProRule" id="PRU00967"/>
    </source>
</evidence>
<evidence type="ECO:0000255" key="4">
    <source>
        <dbReference type="PROSITE-ProRule" id="PRU00968"/>
    </source>
</evidence>
<gene>
    <name type="primary">MT-CYB</name>
    <name type="synonym">COB</name>
    <name type="synonym">CYTB</name>
    <name type="synonym">MTCYB</name>
</gene>
<geneLocation type="mitochondrion"/>
<proteinExistence type="inferred from homology"/>
<organism>
    <name type="scientific">Proechimys cuvieri</name>
    <name type="common">Cuvier's spiny rat</name>
    <dbReference type="NCBI Taxonomy" id="128106"/>
    <lineage>
        <taxon>Eukaryota</taxon>
        <taxon>Metazoa</taxon>
        <taxon>Chordata</taxon>
        <taxon>Craniata</taxon>
        <taxon>Vertebrata</taxon>
        <taxon>Euteleostomi</taxon>
        <taxon>Mammalia</taxon>
        <taxon>Eutheria</taxon>
        <taxon>Euarchontoglires</taxon>
        <taxon>Glires</taxon>
        <taxon>Rodentia</taxon>
        <taxon>Hystricomorpha</taxon>
        <taxon>Echimyidae</taxon>
        <taxon>Proechimys</taxon>
    </lineage>
</organism>
<accession>Q9G2U4</accession>
<name>CYB_PROCU</name>
<protein>
    <recommendedName>
        <fullName>Cytochrome b</fullName>
    </recommendedName>
    <alternativeName>
        <fullName>Complex III subunit 3</fullName>
    </alternativeName>
    <alternativeName>
        <fullName>Complex III subunit III</fullName>
    </alternativeName>
    <alternativeName>
        <fullName>Cytochrome b-c1 complex subunit 3</fullName>
    </alternativeName>
    <alternativeName>
        <fullName>Ubiquinol-cytochrome-c reductase complex cytochrome b subunit</fullName>
    </alternativeName>
</protein>
<feature type="chain" id="PRO_0000061438" description="Cytochrome b">
    <location>
        <begin position="1"/>
        <end position="379"/>
    </location>
</feature>
<feature type="transmembrane region" description="Helical" evidence="2">
    <location>
        <begin position="33"/>
        <end position="53"/>
    </location>
</feature>
<feature type="transmembrane region" description="Helical" evidence="2">
    <location>
        <begin position="77"/>
        <end position="98"/>
    </location>
</feature>
<feature type="transmembrane region" description="Helical" evidence="2">
    <location>
        <begin position="113"/>
        <end position="133"/>
    </location>
</feature>
<feature type="transmembrane region" description="Helical" evidence="2">
    <location>
        <begin position="178"/>
        <end position="198"/>
    </location>
</feature>
<feature type="transmembrane region" description="Helical" evidence="2">
    <location>
        <begin position="226"/>
        <end position="246"/>
    </location>
</feature>
<feature type="transmembrane region" description="Helical" evidence="2">
    <location>
        <begin position="288"/>
        <end position="308"/>
    </location>
</feature>
<feature type="transmembrane region" description="Helical" evidence="2">
    <location>
        <begin position="320"/>
        <end position="340"/>
    </location>
</feature>
<feature type="transmembrane region" description="Helical" evidence="2">
    <location>
        <begin position="347"/>
        <end position="367"/>
    </location>
</feature>
<feature type="binding site" description="axial binding residue" evidence="2">
    <location>
        <position position="83"/>
    </location>
    <ligand>
        <name>heme b</name>
        <dbReference type="ChEBI" id="CHEBI:60344"/>
        <label>b562</label>
    </ligand>
    <ligandPart>
        <name>Fe</name>
        <dbReference type="ChEBI" id="CHEBI:18248"/>
    </ligandPart>
</feature>
<feature type="binding site" description="axial binding residue" evidence="2">
    <location>
        <position position="97"/>
    </location>
    <ligand>
        <name>heme b</name>
        <dbReference type="ChEBI" id="CHEBI:60344"/>
        <label>b566</label>
    </ligand>
    <ligandPart>
        <name>Fe</name>
        <dbReference type="ChEBI" id="CHEBI:18248"/>
    </ligandPart>
</feature>
<feature type="binding site" description="axial binding residue" evidence="2">
    <location>
        <position position="182"/>
    </location>
    <ligand>
        <name>heme b</name>
        <dbReference type="ChEBI" id="CHEBI:60344"/>
        <label>b562</label>
    </ligand>
    <ligandPart>
        <name>Fe</name>
        <dbReference type="ChEBI" id="CHEBI:18248"/>
    </ligandPart>
</feature>
<feature type="binding site" description="axial binding residue" evidence="2">
    <location>
        <position position="196"/>
    </location>
    <ligand>
        <name>heme b</name>
        <dbReference type="ChEBI" id="CHEBI:60344"/>
        <label>b566</label>
    </ligand>
    <ligandPart>
        <name>Fe</name>
        <dbReference type="ChEBI" id="CHEBI:18248"/>
    </ligandPart>
</feature>
<feature type="binding site" evidence="2">
    <location>
        <position position="201"/>
    </location>
    <ligand>
        <name>a ubiquinone</name>
        <dbReference type="ChEBI" id="CHEBI:16389"/>
    </ligand>
</feature>
<comment type="function">
    <text evidence="2">Component of the ubiquinol-cytochrome c reductase complex (complex III or cytochrome b-c1 complex) that is part of the mitochondrial respiratory chain. The b-c1 complex mediates electron transfer from ubiquinol to cytochrome c. Contributes to the generation of a proton gradient across the mitochondrial membrane that is then used for ATP synthesis.</text>
</comment>
<comment type="cofactor">
    <cofactor evidence="2">
        <name>heme b</name>
        <dbReference type="ChEBI" id="CHEBI:60344"/>
    </cofactor>
    <text evidence="2">Binds 2 heme b groups non-covalently.</text>
</comment>
<comment type="subunit">
    <text evidence="2">The cytochrome bc1 complex contains 11 subunits: 3 respiratory subunits (MT-CYB, CYC1 and UQCRFS1), 2 core proteins (UQCRC1 and UQCRC2) and 6 low-molecular weight proteins (UQCRH/QCR6, UQCRB/QCR7, UQCRQ/QCR8, UQCR10/QCR9, UQCR11/QCR10 and a cleavage product of UQCRFS1). This cytochrome bc1 complex then forms a dimer.</text>
</comment>
<comment type="subcellular location">
    <subcellularLocation>
        <location evidence="2">Mitochondrion inner membrane</location>
        <topology evidence="2">Multi-pass membrane protein</topology>
    </subcellularLocation>
</comment>
<comment type="miscellaneous">
    <text evidence="1">Heme 1 (or BL or b562) is low-potential and absorbs at about 562 nm, and heme 2 (or BH or b566) is high-potential and absorbs at about 566 nm.</text>
</comment>
<comment type="similarity">
    <text evidence="3 4">Belongs to the cytochrome b family.</text>
</comment>
<comment type="caution">
    <text evidence="2">The full-length protein contains only eight transmembrane helices, not nine as predicted by bioinformatics tools.</text>
</comment>
<sequence length="379" mass="43125">MTNLRKSHPLIKIINHSFIDLPTPSNISAWWNFGSLLGVCLMLQIITGLFLAMHYTADTTTAFSSITHICRDVNYGWLIRYTHANGASMFFIFLYFHIGRGIYYGSYTFMETWNIGVILLFTVMATAFMGYVLPWGQMSFWGATVITNLLSAIPYIGPTLVEWIWGGFSVDKATLTRFFAFHFVLPFIITAMVMIHLLFLHETGSNNPSGLNSDSDKIPFHPYYTIKDILGLLLMLLTLMTLTLFSPDLLGDPDKYTPANPLNTPPHIKPEWYFLFAYAILRSIPNKLGGVLALVFSILILMLFPMMHMSKQRSMTFRPLSQCLLWILVANLIILTWIGGQPVEHPFITIGQLASISYFCIILILMPTTSFMENKLLKW</sequence>
<dbReference type="EMBL" id="AJ251400">
    <property type="protein sequence ID" value="CAC17740.1"/>
    <property type="molecule type" value="Genomic_DNA"/>
</dbReference>
<dbReference type="SMR" id="Q9G2U4"/>
<dbReference type="GO" id="GO:0005743">
    <property type="term" value="C:mitochondrial inner membrane"/>
    <property type="evidence" value="ECO:0007669"/>
    <property type="project" value="UniProtKB-SubCell"/>
</dbReference>
<dbReference type="GO" id="GO:0045275">
    <property type="term" value="C:respiratory chain complex III"/>
    <property type="evidence" value="ECO:0007669"/>
    <property type="project" value="InterPro"/>
</dbReference>
<dbReference type="GO" id="GO:0046872">
    <property type="term" value="F:metal ion binding"/>
    <property type="evidence" value="ECO:0007669"/>
    <property type="project" value="UniProtKB-KW"/>
</dbReference>
<dbReference type="GO" id="GO:0008121">
    <property type="term" value="F:ubiquinol-cytochrome-c reductase activity"/>
    <property type="evidence" value="ECO:0007669"/>
    <property type="project" value="InterPro"/>
</dbReference>
<dbReference type="GO" id="GO:0006122">
    <property type="term" value="P:mitochondrial electron transport, ubiquinol to cytochrome c"/>
    <property type="evidence" value="ECO:0007669"/>
    <property type="project" value="TreeGrafter"/>
</dbReference>
<dbReference type="CDD" id="cd00290">
    <property type="entry name" value="cytochrome_b_C"/>
    <property type="match status" value="1"/>
</dbReference>
<dbReference type="CDD" id="cd00284">
    <property type="entry name" value="Cytochrome_b_N"/>
    <property type="match status" value="1"/>
</dbReference>
<dbReference type="FunFam" id="1.20.810.10:FF:000002">
    <property type="entry name" value="Cytochrome b"/>
    <property type="match status" value="1"/>
</dbReference>
<dbReference type="Gene3D" id="1.20.810.10">
    <property type="entry name" value="Cytochrome Bc1 Complex, Chain C"/>
    <property type="match status" value="1"/>
</dbReference>
<dbReference type="InterPro" id="IPR005798">
    <property type="entry name" value="Cyt_b/b6_C"/>
</dbReference>
<dbReference type="InterPro" id="IPR036150">
    <property type="entry name" value="Cyt_b/b6_C_sf"/>
</dbReference>
<dbReference type="InterPro" id="IPR005797">
    <property type="entry name" value="Cyt_b/b6_N"/>
</dbReference>
<dbReference type="InterPro" id="IPR027387">
    <property type="entry name" value="Cytb/b6-like_sf"/>
</dbReference>
<dbReference type="InterPro" id="IPR030689">
    <property type="entry name" value="Cytochrome_b"/>
</dbReference>
<dbReference type="InterPro" id="IPR048260">
    <property type="entry name" value="Cytochrome_b_C_euk/bac"/>
</dbReference>
<dbReference type="InterPro" id="IPR048259">
    <property type="entry name" value="Cytochrome_b_N_euk/bac"/>
</dbReference>
<dbReference type="InterPro" id="IPR016174">
    <property type="entry name" value="Di-haem_cyt_TM"/>
</dbReference>
<dbReference type="PANTHER" id="PTHR19271">
    <property type="entry name" value="CYTOCHROME B"/>
    <property type="match status" value="1"/>
</dbReference>
<dbReference type="PANTHER" id="PTHR19271:SF16">
    <property type="entry name" value="CYTOCHROME B"/>
    <property type="match status" value="1"/>
</dbReference>
<dbReference type="Pfam" id="PF00032">
    <property type="entry name" value="Cytochrom_B_C"/>
    <property type="match status" value="1"/>
</dbReference>
<dbReference type="Pfam" id="PF00033">
    <property type="entry name" value="Cytochrome_B"/>
    <property type="match status" value="1"/>
</dbReference>
<dbReference type="PIRSF" id="PIRSF038885">
    <property type="entry name" value="COB"/>
    <property type="match status" value="1"/>
</dbReference>
<dbReference type="SUPFAM" id="SSF81648">
    <property type="entry name" value="a domain/subunit of cytochrome bc1 complex (Ubiquinol-cytochrome c reductase)"/>
    <property type="match status" value="1"/>
</dbReference>
<dbReference type="SUPFAM" id="SSF81342">
    <property type="entry name" value="Transmembrane di-heme cytochromes"/>
    <property type="match status" value="1"/>
</dbReference>
<dbReference type="PROSITE" id="PS51003">
    <property type="entry name" value="CYTB_CTER"/>
    <property type="match status" value="1"/>
</dbReference>
<dbReference type="PROSITE" id="PS51002">
    <property type="entry name" value="CYTB_NTER"/>
    <property type="match status" value="1"/>
</dbReference>
<keyword id="KW-0249">Electron transport</keyword>
<keyword id="KW-0349">Heme</keyword>
<keyword id="KW-0408">Iron</keyword>
<keyword id="KW-0472">Membrane</keyword>
<keyword id="KW-0479">Metal-binding</keyword>
<keyword id="KW-0496">Mitochondrion</keyword>
<keyword id="KW-0999">Mitochondrion inner membrane</keyword>
<keyword id="KW-0679">Respiratory chain</keyword>
<keyword id="KW-0812">Transmembrane</keyword>
<keyword id="KW-1133">Transmembrane helix</keyword>
<keyword id="KW-0813">Transport</keyword>
<keyword id="KW-0830">Ubiquinone</keyword>